<sequence length="270" mass="31643">MEYIKKIALYMSVLLLIIFIGGCGNMKEEQKKEANTNKTDSKEEKIKKSFAKTLDMYPIKNLEELYDKEGYRDGEFEKGDKGMWTIYTDFAKSNKPGELSNEGMVLYLDRNTRTAKGYYFVRTFYRKDKLPDRKNYKVEMKNNKIILLDKVEDPNLKKRIENFKFFGQYANLKELKNYSNGDVSINENVPSYDVKYKMSNKDENVKQLRSRYNIPTDKSPVLKMHIDGNLKGSSVGDRKLEIDFSKRENSHLSVIDSLDYQPAKVDEDER</sequence>
<comment type="subcellular location">
    <subcellularLocation>
        <location evidence="1">Cell membrane</location>
        <topology evidence="1">Lipid-anchor</topology>
    </subcellularLocation>
</comment>
<comment type="similarity">
    <text evidence="2">Belongs to the staphylococcal tandem lipoprotein family.</text>
</comment>
<comment type="sequence caution" evidence="2">
    <conflict type="erroneous initiation">
        <sequence resource="EMBL-CDS" id="BAB56607"/>
    </conflict>
</comment>
<evidence type="ECO:0000255" key="1">
    <source>
        <dbReference type="PROSITE-ProRule" id="PRU00303"/>
    </source>
</evidence>
<evidence type="ECO:0000305" key="2"/>
<accession>Q99WF7</accession>
<proteinExistence type="inferred from homology"/>
<organism>
    <name type="scientific">Staphylococcus aureus (strain Mu50 / ATCC 700699)</name>
    <dbReference type="NCBI Taxonomy" id="158878"/>
    <lineage>
        <taxon>Bacteria</taxon>
        <taxon>Bacillati</taxon>
        <taxon>Bacillota</taxon>
        <taxon>Bacilli</taxon>
        <taxon>Bacillales</taxon>
        <taxon>Staphylococcaceae</taxon>
        <taxon>Staphylococcus</taxon>
    </lineage>
</organism>
<keyword id="KW-1003">Cell membrane</keyword>
<keyword id="KW-0449">Lipoprotein</keyword>
<keyword id="KW-0472">Membrane</keyword>
<keyword id="KW-0564">Palmitate</keyword>
<keyword id="KW-0732">Signal</keyword>
<feature type="signal peptide" evidence="1">
    <location>
        <begin position="1"/>
        <end position="22"/>
    </location>
</feature>
<feature type="chain" id="PRO_0000282131" description="Uncharacterized lipoprotein SAV0445">
    <location>
        <begin position="23"/>
        <end position="270"/>
    </location>
</feature>
<feature type="lipid moiety-binding region" description="N-palmitoyl cysteine" evidence="1">
    <location>
        <position position="23"/>
    </location>
</feature>
<feature type="lipid moiety-binding region" description="S-diacylglycerol cysteine" evidence="1">
    <location>
        <position position="23"/>
    </location>
</feature>
<gene>
    <name type="primary">lpl9</name>
    <name type="ordered locus">SAV0445</name>
</gene>
<name>Y445_STAAM</name>
<protein>
    <recommendedName>
        <fullName>Uncharacterized lipoprotein SAV0445</fullName>
    </recommendedName>
</protein>
<reference key="1">
    <citation type="journal article" date="2001" name="Lancet">
        <title>Whole genome sequencing of meticillin-resistant Staphylococcus aureus.</title>
        <authorList>
            <person name="Kuroda M."/>
            <person name="Ohta T."/>
            <person name="Uchiyama I."/>
            <person name="Baba T."/>
            <person name="Yuzawa H."/>
            <person name="Kobayashi I."/>
            <person name="Cui L."/>
            <person name="Oguchi A."/>
            <person name="Aoki K."/>
            <person name="Nagai Y."/>
            <person name="Lian J.-Q."/>
            <person name="Ito T."/>
            <person name="Kanamori M."/>
            <person name="Matsumaru H."/>
            <person name="Maruyama A."/>
            <person name="Murakami H."/>
            <person name="Hosoyama A."/>
            <person name="Mizutani-Ui Y."/>
            <person name="Takahashi N.K."/>
            <person name="Sawano T."/>
            <person name="Inoue R."/>
            <person name="Kaito C."/>
            <person name="Sekimizu K."/>
            <person name="Hirakawa H."/>
            <person name="Kuhara S."/>
            <person name="Goto S."/>
            <person name="Yabuzaki J."/>
            <person name="Kanehisa M."/>
            <person name="Yamashita A."/>
            <person name="Oshima K."/>
            <person name="Furuya K."/>
            <person name="Yoshino C."/>
            <person name="Shiba T."/>
            <person name="Hattori M."/>
            <person name="Ogasawara N."/>
            <person name="Hayashi H."/>
            <person name="Hiramatsu K."/>
        </authorList>
    </citation>
    <scope>NUCLEOTIDE SEQUENCE [LARGE SCALE GENOMIC DNA]</scope>
    <source>
        <strain>Mu50 / ATCC 700699</strain>
    </source>
</reference>
<dbReference type="EMBL" id="BA000017">
    <property type="protein sequence ID" value="BAB56607.1"/>
    <property type="status" value="ALT_INIT"/>
    <property type="molecule type" value="Genomic_DNA"/>
</dbReference>
<dbReference type="SMR" id="Q99WF7"/>
<dbReference type="KEGG" id="sav:SAV0445"/>
<dbReference type="HOGENOM" id="CLU_071589_0_1_9"/>
<dbReference type="Proteomes" id="UP000002481">
    <property type="component" value="Chromosome"/>
</dbReference>
<dbReference type="GO" id="GO:0005886">
    <property type="term" value="C:plasma membrane"/>
    <property type="evidence" value="ECO:0007669"/>
    <property type="project" value="UniProtKB-SubCell"/>
</dbReference>
<dbReference type="Gene3D" id="2.50.20.40">
    <property type="match status" value="1"/>
</dbReference>
<dbReference type="InterPro" id="IPR007595">
    <property type="entry name" value="Csa"/>
</dbReference>
<dbReference type="InterPro" id="IPR038641">
    <property type="entry name" value="Csa_sf"/>
</dbReference>
<dbReference type="NCBIfam" id="TIGR01742">
    <property type="entry name" value="SA_tandem_lipo"/>
    <property type="match status" value="1"/>
</dbReference>
<dbReference type="Pfam" id="PF04507">
    <property type="entry name" value="DUF576"/>
    <property type="match status" value="1"/>
</dbReference>
<dbReference type="PROSITE" id="PS51257">
    <property type="entry name" value="PROKAR_LIPOPROTEIN"/>
    <property type="match status" value="1"/>
</dbReference>